<organism>
    <name type="scientific">Saccharolobus solfataricus (strain ATCC 35092 / DSM 1617 / JCM 11322 / P2)</name>
    <name type="common">Sulfolobus solfataricus</name>
    <dbReference type="NCBI Taxonomy" id="273057"/>
    <lineage>
        <taxon>Archaea</taxon>
        <taxon>Thermoproteota</taxon>
        <taxon>Thermoprotei</taxon>
        <taxon>Sulfolobales</taxon>
        <taxon>Sulfolobaceae</taxon>
        <taxon>Saccharolobus</taxon>
    </lineage>
</organism>
<name>LYSX_SACS2</name>
<protein>
    <recommendedName>
        <fullName>Alpha-aminoadipate--LysW ligase LysX</fullName>
        <shortName>AAA--LysW ligase LysX</shortName>
        <ecNumber>6.3.2.43</ecNumber>
    </recommendedName>
</protein>
<sequence>MPRWEEKNLIEEGKKLGYQVATIYSKDFVLFSNDFTIDNDTDLFIQRNVSHNRALITSFLVEQVGYPVINDHTTLIRCENKIFTTYILARHNIPTPKTFIAFDKTNAIEYSKKLGYPVVIKPVEGSWGRMVAKADNLDVLYSYLEYQEFSTQKYKDIYYIQEFVNKPNRDIRIFVIGDETPVGIYRVNENNWRTNTALGAKAYPLKIDEELRELALKVKDIIGGFFLGIDIFEDKDRGYLVDEVNGVPEYKNTVRVNNFNVSKFLLEKAAEWVKK</sequence>
<proteinExistence type="evidence at protein level"/>
<dbReference type="EC" id="6.3.2.43"/>
<dbReference type="EMBL" id="AE006641">
    <property type="protein sequence ID" value="AAK40505.1"/>
    <property type="status" value="ALT_INIT"/>
    <property type="molecule type" value="Genomic_DNA"/>
</dbReference>
<dbReference type="EMBL" id="BK000545">
    <property type="protein sequence ID" value="DAA00053.1"/>
    <property type="molecule type" value="Genomic_DNA"/>
</dbReference>
<dbReference type="PIR" id="B90156">
    <property type="entry name" value="B90156"/>
</dbReference>
<dbReference type="SMR" id="Q7SI95"/>
<dbReference type="FunCoup" id="Q7SI95">
    <property type="interactions" value="139"/>
</dbReference>
<dbReference type="STRING" id="273057.SSO0159"/>
<dbReference type="PaxDb" id="273057-SSO0159"/>
<dbReference type="EnsemblBacteria" id="AAK40505">
    <property type="protein sequence ID" value="AAK40505"/>
    <property type="gene ID" value="SSO0159"/>
</dbReference>
<dbReference type="KEGG" id="sso:SSO0159"/>
<dbReference type="PATRIC" id="fig|273057.12.peg.156"/>
<dbReference type="eggNOG" id="arCOG01589">
    <property type="taxonomic scope" value="Archaea"/>
</dbReference>
<dbReference type="HOGENOM" id="CLU_054353_2_1_2"/>
<dbReference type="InParanoid" id="Q7SI95"/>
<dbReference type="PhylomeDB" id="Q7SI95"/>
<dbReference type="UniPathway" id="UPA00033">
    <property type="reaction ID" value="UER00035"/>
</dbReference>
<dbReference type="Proteomes" id="UP000001974">
    <property type="component" value="Chromosome"/>
</dbReference>
<dbReference type="GO" id="GO:0005737">
    <property type="term" value="C:cytoplasm"/>
    <property type="evidence" value="ECO:0000318"/>
    <property type="project" value="GO_Central"/>
</dbReference>
<dbReference type="GO" id="GO:0005524">
    <property type="term" value="F:ATP binding"/>
    <property type="evidence" value="ECO:0007669"/>
    <property type="project" value="UniProtKB-KW"/>
</dbReference>
<dbReference type="GO" id="GO:0043774">
    <property type="term" value="F:coenzyme F420-2 alpha-glutamyl ligase activity"/>
    <property type="evidence" value="ECO:0000318"/>
    <property type="project" value="GO_Central"/>
</dbReference>
<dbReference type="GO" id="GO:0046872">
    <property type="term" value="F:metal ion binding"/>
    <property type="evidence" value="ECO:0007669"/>
    <property type="project" value="UniProtKB-KW"/>
</dbReference>
<dbReference type="GO" id="GO:0019878">
    <property type="term" value="P:lysine biosynthetic process via aminoadipic acid"/>
    <property type="evidence" value="ECO:0007669"/>
    <property type="project" value="UniProtKB-UniPathway"/>
</dbReference>
<dbReference type="GO" id="GO:0036211">
    <property type="term" value="P:protein modification process"/>
    <property type="evidence" value="ECO:0007669"/>
    <property type="project" value="InterPro"/>
</dbReference>
<dbReference type="FunFam" id="3.30.1490.20:FF:000025">
    <property type="entry name" value="Alpha-aminoadipate--LysW ligase LysX protein"/>
    <property type="match status" value="1"/>
</dbReference>
<dbReference type="FunFam" id="3.30.470.20:FF:000058">
    <property type="entry name" value="Alpha-aminoadipate--LysW ligase LysX protein"/>
    <property type="match status" value="1"/>
</dbReference>
<dbReference type="FunFam" id="3.40.50.20:FF:000042">
    <property type="entry name" value="RimK-related lysine biosynthesis protein"/>
    <property type="match status" value="1"/>
</dbReference>
<dbReference type="Gene3D" id="3.40.50.20">
    <property type="match status" value="1"/>
</dbReference>
<dbReference type="Gene3D" id="3.30.1490.20">
    <property type="entry name" value="ATP-grasp fold, A domain"/>
    <property type="match status" value="1"/>
</dbReference>
<dbReference type="Gene3D" id="3.30.470.20">
    <property type="entry name" value="ATP-grasp fold, B domain"/>
    <property type="match status" value="1"/>
</dbReference>
<dbReference type="InterPro" id="IPR011761">
    <property type="entry name" value="ATP-grasp"/>
</dbReference>
<dbReference type="InterPro" id="IPR013651">
    <property type="entry name" value="ATP-grasp_RimK-type"/>
</dbReference>
<dbReference type="InterPro" id="IPR013815">
    <property type="entry name" value="ATP_grasp_subdomain_1"/>
</dbReference>
<dbReference type="InterPro" id="IPR054562">
    <property type="entry name" value="LysX/ArgX_preATP_grasp"/>
</dbReference>
<dbReference type="InterPro" id="IPR011870">
    <property type="entry name" value="LysX_arch"/>
</dbReference>
<dbReference type="InterPro" id="IPR016185">
    <property type="entry name" value="PreATP-grasp_dom_sf"/>
</dbReference>
<dbReference type="InterPro" id="IPR004666">
    <property type="entry name" value="Rp_bS6_RimK/Lys_biosynth_LsyX"/>
</dbReference>
<dbReference type="NCBIfam" id="TIGR02144">
    <property type="entry name" value="LysX_arch"/>
    <property type="match status" value="1"/>
</dbReference>
<dbReference type="NCBIfam" id="TIGR00768">
    <property type="entry name" value="rimK_fam"/>
    <property type="match status" value="1"/>
</dbReference>
<dbReference type="PANTHER" id="PTHR21621:SF2">
    <property type="entry name" value="COENZYME GAMMA-F420-2:ALPHA-L-GLUTAMATE LIGASE"/>
    <property type="match status" value="1"/>
</dbReference>
<dbReference type="PANTHER" id="PTHR21621">
    <property type="entry name" value="RIBOSOMAL PROTEIN S6 MODIFICATION PROTEIN"/>
    <property type="match status" value="1"/>
</dbReference>
<dbReference type="Pfam" id="PF22626">
    <property type="entry name" value="LysX_preATP_grasp"/>
    <property type="match status" value="1"/>
</dbReference>
<dbReference type="Pfam" id="PF08443">
    <property type="entry name" value="RimK"/>
    <property type="match status" value="1"/>
</dbReference>
<dbReference type="SUPFAM" id="SSF56059">
    <property type="entry name" value="Glutathione synthetase ATP-binding domain-like"/>
    <property type="match status" value="1"/>
</dbReference>
<dbReference type="SUPFAM" id="SSF52440">
    <property type="entry name" value="PreATP-grasp domain"/>
    <property type="match status" value="1"/>
</dbReference>
<dbReference type="PROSITE" id="PS50975">
    <property type="entry name" value="ATP_GRASP"/>
    <property type="match status" value="1"/>
</dbReference>
<keyword id="KW-0028">Amino-acid biosynthesis</keyword>
<keyword id="KW-0067">ATP-binding</keyword>
<keyword id="KW-0436">Ligase</keyword>
<keyword id="KW-0457">Lysine biosynthesis</keyword>
<keyword id="KW-0460">Magnesium</keyword>
<keyword id="KW-0479">Metal-binding</keyword>
<keyword id="KW-0547">Nucleotide-binding</keyword>
<keyword id="KW-1185">Reference proteome</keyword>
<reference key="1">
    <citation type="journal article" date="2001" name="Proc. Natl. Acad. Sci. U.S.A.">
        <title>The complete genome of the crenarchaeon Sulfolobus solfataricus P2.</title>
        <authorList>
            <person name="She Q."/>
            <person name="Singh R.K."/>
            <person name="Confalonieri F."/>
            <person name="Zivanovic Y."/>
            <person name="Allard G."/>
            <person name="Awayez M.J."/>
            <person name="Chan-Weiher C.C.-Y."/>
            <person name="Clausen I.G."/>
            <person name="Curtis B.A."/>
            <person name="De Moors A."/>
            <person name="Erauso G."/>
            <person name="Fletcher C."/>
            <person name="Gordon P.M.K."/>
            <person name="Heikamp-de Jong I."/>
            <person name="Jeffries A.C."/>
            <person name="Kozera C.J."/>
            <person name="Medina N."/>
            <person name="Peng X."/>
            <person name="Thi-Ngoc H.P."/>
            <person name="Redder P."/>
            <person name="Schenk M.E."/>
            <person name="Theriault C."/>
            <person name="Tolstrup N."/>
            <person name="Charlebois R.L."/>
            <person name="Doolittle W.F."/>
            <person name="Duguet M."/>
            <person name="Gaasterland T."/>
            <person name="Garrett R.A."/>
            <person name="Ragan M.A."/>
            <person name="Sensen C.W."/>
            <person name="Van der Oost J."/>
        </authorList>
    </citation>
    <scope>NUCLEOTIDE SEQUENCE [LARGE SCALE GENOMIC DNA]</scope>
    <source>
        <strain>ATCC 35092 / DSM 1617 / JCM 11322 / P2</strain>
    </source>
</reference>
<reference key="2">
    <citation type="journal article" date="2002" name="J. Biol. Chem.">
        <title>The Sulfolobus solfataricus Lrp-like protein LysM regulates lysine biosynthesis in response to lysine availability.</title>
        <authorList>
            <person name="Brinkman A.B."/>
            <person name="Bell S.D."/>
            <person name="Lebbink R.J."/>
            <person name="de Vos W.M."/>
            <person name="van der Oost J."/>
        </authorList>
    </citation>
    <scope>FUNCTION IN LYSINE BIOSYNTHESIS</scope>
    <scope>INDUCTION</scope>
    <source>
        <strain>ATCC 35092 / DSM 1617 / JCM 11322 / P2</strain>
    </source>
</reference>
<evidence type="ECO:0000250" key="1"/>
<evidence type="ECO:0000250" key="2">
    <source>
        <dbReference type="UniProtKB" id="Q4JAP9"/>
    </source>
</evidence>
<evidence type="ECO:0000255" key="3">
    <source>
        <dbReference type="PROSITE-ProRule" id="PRU00409"/>
    </source>
</evidence>
<evidence type="ECO:0000269" key="4">
    <source>
    </source>
</evidence>
<evidence type="ECO:0000305" key="5"/>
<evidence type="ECO:0000305" key="6">
    <source>
    </source>
</evidence>
<comment type="function">
    <text evidence="6">Catalyzes the ATP-dependent formation of a covalent bond between the amino group of alpha-aminoadipate (AAA) and the gamma-carboxyl group of the C-terminal glutamate residue in LysW.</text>
</comment>
<comment type="catalytic activity">
    <reaction evidence="2">
        <text>[amino-group carrier protein]-C-terminal-L-glutamate + L-2-aminoadipate + ATP = [amino-group carrier protein]-C-terminal-N-(1,4-dicarboxybutan-1-yl)-L-glutamine + ADP + phosphate + H(+)</text>
        <dbReference type="Rhea" id="RHEA:41940"/>
        <dbReference type="Rhea" id="RHEA-COMP:9693"/>
        <dbReference type="Rhea" id="RHEA-COMP:9694"/>
        <dbReference type="ChEBI" id="CHEBI:15378"/>
        <dbReference type="ChEBI" id="CHEBI:30616"/>
        <dbReference type="ChEBI" id="CHEBI:43474"/>
        <dbReference type="ChEBI" id="CHEBI:58672"/>
        <dbReference type="ChEBI" id="CHEBI:78503"/>
        <dbReference type="ChEBI" id="CHEBI:78525"/>
        <dbReference type="ChEBI" id="CHEBI:456216"/>
        <dbReference type="EC" id="6.3.2.43"/>
    </reaction>
</comment>
<comment type="cofactor">
    <cofactor evidence="1">
        <name>Mg(2+)</name>
        <dbReference type="ChEBI" id="CHEBI:18420"/>
    </cofactor>
    <text evidence="1">Binds 2 magnesium ions per subunit.</text>
</comment>
<comment type="pathway">
    <text>Amino-acid biosynthesis; L-lysine biosynthesis via AAA pathway; L-lysine from L-alpha-aminoadipate (Thermus route): step 1/5.</text>
</comment>
<comment type="subunit">
    <text evidence="1">Homodimer.</text>
</comment>
<comment type="induction">
    <text evidence="4">Activated by LysM and repressed by lysine.</text>
</comment>
<comment type="similarity">
    <text evidence="5">Belongs to the RimK family. LysX subfamily.</text>
</comment>
<comment type="sequence caution" evidence="5">
    <conflict type="erroneous initiation">
        <sequence resource="EMBL-CDS" id="AAK40505"/>
    </conflict>
    <text>Extended N-terminus.</text>
</comment>
<accession>Q7SI95</accession>
<accession>Q980W7</accession>
<gene>
    <name type="primary">lysX</name>
    <name type="ordered locus">SSO0159</name>
</gene>
<feature type="chain" id="PRO_0000205500" description="Alpha-aminoadipate--LysW ligase LysX">
    <location>
        <begin position="1"/>
        <end position="275"/>
    </location>
</feature>
<feature type="domain" description="ATP-grasp" evidence="3">
    <location>
        <begin position="85"/>
        <end position="270"/>
    </location>
</feature>
<feature type="short sequence motif" description="N-[TS] motif that is essential for LysX substrate specificity">
    <location>
        <begin position="252"/>
        <end position="253"/>
    </location>
</feature>
<feature type="binding site" evidence="1">
    <location>
        <position position="81"/>
    </location>
    <ligand>
        <name>ATP</name>
        <dbReference type="ChEBI" id="CHEBI:30616"/>
    </ligand>
</feature>
<feature type="binding site" evidence="1">
    <location>
        <position position="121"/>
    </location>
    <ligand>
        <name>ATP</name>
        <dbReference type="ChEBI" id="CHEBI:30616"/>
    </ligand>
</feature>
<feature type="binding site" evidence="3">
    <location>
        <begin position="125"/>
        <end position="131"/>
    </location>
    <ligand>
        <name>ATP</name>
        <dbReference type="ChEBI" id="CHEBI:30616"/>
    </ligand>
</feature>
<feature type="binding site" evidence="3">
    <location>
        <begin position="161"/>
        <end position="172"/>
    </location>
    <ligand>
        <name>ATP</name>
        <dbReference type="ChEBI" id="CHEBI:30616"/>
    </ligand>
</feature>
<feature type="binding site" evidence="1">
    <location>
        <position position="186"/>
    </location>
    <ligand>
        <name>ATP</name>
        <dbReference type="ChEBI" id="CHEBI:30616"/>
    </ligand>
</feature>
<feature type="binding site" evidence="1">
    <location>
        <position position="195"/>
    </location>
    <ligand>
        <name>ATP</name>
        <dbReference type="ChEBI" id="CHEBI:30616"/>
    </ligand>
</feature>
<feature type="binding site" evidence="1">
    <location>
        <position position="230"/>
    </location>
    <ligand>
        <name>Mg(2+)</name>
        <dbReference type="ChEBI" id="CHEBI:18420"/>
        <label>1</label>
    </ligand>
</feature>
<feature type="binding site" evidence="1">
    <location>
        <position position="243"/>
    </location>
    <ligand>
        <name>Mg(2+)</name>
        <dbReference type="ChEBI" id="CHEBI:18420"/>
        <label>1</label>
    </ligand>
</feature>
<feature type="binding site" evidence="1">
    <location>
        <position position="243"/>
    </location>
    <ligand>
        <name>Mg(2+)</name>
        <dbReference type="ChEBI" id="CHEBI:18420"/>
        <label>2</label>
    </ligand>
</feature>
<feature type="binding site" evidence="1">
    <location>
        <position position="245"/>
    </location>
    <ligand>
        <name>Mg(2+)</name>
        <dbReference type="ChEBI" id="CHEBI:18420"/>
        <label>2</label>
    </ligand>
</feature>